<name>DBP10_NEUCR</name>
<organism>
    <name type="scientific">Neurospora crassa (strain ATCC 24698 / 74-OR23-1A / CBS 708.71 / DSM 1257 / FGSC 987)</name>
    <dbReference type="NCBI Taxonomy" id="367110"/>
    <lineage>
        <taxon>Eukaryota</taxon>
        <taxon>Fungi</taxon>
        <taxon>Dikarya</taxon>
        <taxon>Ascomycota</taxon>
        <taxon>Pezizomycotina</taxon>
        <taxon>Sordariomycetes</taxon>
        <taxon>Sordariomycetidae</taxon>
        <taxon>Sordariales</taxon>
        <taxon>Sordariaceae</taxon>
        <taxon>Neurospora</taxon>
    </lineage>
</organism>
<dbReference type="EC" id="3.6.4.13"/>
<dbReference type="EMBL" id="CM002239">
    <property type="protein sequence ID" value="EAA33062.1"/>
    <property type="molecule type" value="Genomic_DNA"/>
</dbReference>
<dbReference type="RefSeq" id="XP_962298.1">
    <property type="nucleotide sequence ID" value="XM_957205.2"/>
</dbReference>
<dbReference type="SMR" id="Q7S9J4"/>
<dbReference type="FunCoup" id="Q7S9J4">
    <property type="interactions" value="1020"/>
</dbReference>
<dbReference type="STRING" id="367110.Q7S9J4"/>
<dbReference type="PaxDb" id="5141-EFNCRP00000008050"/>
<dbReference type="EnsemblFungi" id="EAA33062">
    <property type="protein sequence ID" value="EAA33062"/>
    <property type="gene ID" value="NCU07712"/>
</dbReference>
<dbReference type="GeneID" id="3878446"/>
<dbReference type="KEGG" id="ncr:NCU07712"/>
<dbReference type="VEuPathDB" id="FungiDB:NCU07712"/>
<dbReference type="HOGENOM" id="CLU_003041_5_2_1"/>
<dbReference type="InParanoid" id="Q7S9J4"/>
<dbReference type="OMA" id="EDQFGMM"/>
<dbReference type="OrthoDB" id="10261375at2759"/>
<dbReference type="Proteomes" id="UP000001805">
    <property type="component" value="Chromosome 4, Linkage Group IV"/>
</dbReference>
<dbReference type="GO" id="GO:0005730">
    <property type="term" value="C:nucleolus"/>
    <property type="evidence" value="ECO:0000318"/>
    <property type="project" value="GO_Central"/>
</dbReference>
<dbReference type="GO" id="GO:0005524">
    <property type="term" value="F:ATP binding"/>
    <property type="evidence" value="ECO:0007669"/>
    <property type="project" value="UniProtKB-KW"/>
</dbReference>
<dbReference type="GO" id="GO:0016887">
    <property type="term" value="F:ATP hydrolysis activity"/>
    <property type="evidence" value="ECO:0007669"/>
    <property type="project" value="RHEA"/>
</dbReference>
<dbReference type="GO" id="GO:0003723">
    <property type="term" value="F:RNA binding"/>
    <property type="evidence" value="ECO:0007669"/>
    <property type="project" value="UniProtKB-KW"/>
</dbReference>
<dbReference type="GO" id="GO:0003724">
    <property type="term" value="F:RNA helicase activity"/>
    <property type="evidence" value="ECO:0007669"/>
    <property type="project" value="UniProtKB-EC"/>
</dbReference>
<dbReference type="GO" id="GO:0006364">
    <property type="term" value="P:rRNA processing"/>
    <property type="evidence" value="ECO:0000318"/>
    <property type="project" value="GO_Central"/>
</dbReference>
<dbReference type="CDD" id="cd17959">
    <property type="entry name" value="DEADc_DDX54"/>
    <property type="match status" value="1"/>
</dbReference>
<dbReference type="CDD" id="cd18787">
    <property type="entry name" value="SF2_C_DEAD"/>
    <property type="match status" value="1"/>
</dbReference>
<dbReference type="FunFam" id="3.40.50.300:FF:000865">
    <property type="entry name" value="ATP-dependent RNA helicase DDX54"/>
    <property type="match status" value="1"/>
</dbReference>
<dbReference type="Gene3D" id="3.40.50.300">
    <property type="entry name" value="P-loop containing nucleotide triphosphate hydrolases"/>
    <property type="match status" value="2"/>
</dbReference>
<dbReference type="InterPro" id="IPR012541">
    <property type="entry name" value="DBP10_C"/>
</dbReference>
<dbReference type="InterPro" id="IPR033517">
    <property type="entry name" value="DDX54/DBP10_DEAD-box_helicase"/>
</dbReference>
<dbReference type="InterPro" id="IPR011545">
    <property type="entry name" value="DEAD/DEAH_box_helicase_dom"/>
</dbReference>
<dbReference type="InterPro" id="IPR050079">
    <property type="entry name" value="DEAD_box_RNA_helicase"/>
</dbReference>
<dbReference type="InterPro" id="IPR014001">
    <property type="entry name" value="Helicase_ATP-bd"/>
</dbReference>
<dbReference type="InterPro" id="IPR001650">
    <property type="entry name" value="Helicase_C-like"/>
</dbReference>
<dbReference type="InterPro" id="IPR027417">
    <property type="entry name" value="P-loop_NTPase"/>
</dbReference>
<dbReference type="InterPro" id="IPR000629">
    <property type="entry name" value="RNA-helicase_DEAD-box_CS"/>
</dbReference>
<dbReference type="InterPro" id="IPR014014">
    <property type="entry name" value="RNA_helicase_DEAD_Q_motif"/>
</dbReference>
<dbReference type="PANTHER" id="PTHR47959">
    <property type="entry name" value="ATP-DEPENDENT RNA HELICASE RHLE-RELATED"/>
    <property type="match status" value="1"/>
</dbReference>
<dbReference type="PANTHER" id="PTHR47959:SF8">
    <property type="entry name" value="RNA HELICASE"/>
    <property type="match status" value="1"/>
</dbReference>
<dbReference type="Pfam" id="PF08147">
    <property type="entry name" value="DBP10CT"/>
    <property type="match status" value="1"/>
</dbReference>
<dbReference type="Pfam" id="PF00270">
    <property type="entry name" value="DEAD"/>
    <property type="match status" value="1"/>
</dbReference>
<dbReference type="Pfam" id="PF00271">
    <property type="entry name" value="Helicase_C"/>
    <property type="match status" value="1"/>
</dbReference>
<dbReference type="SMART" id="SM01123">
    <property type="entry name" value="DBP10CT"/>
    <property type="match status" value="1"/>
</dbReference>
<dbReference type="SMART" id="SM00487">
    <property type="entry name" value="DEXDc"/>
    <property type="match status" value="1"/>
</dbReference>
<dbReference type="SMART" id="SM00490">
    <property type="entry name" value="HELICc"/>
    <property type="match status" value="1"/>
</dbReference>
<dbReference type="SUPFAM" id="SSF52540">
    <property type="entry name" value="P-loop containing nucleoside triphosphate hydrolases"/>
    <property type="match status" value="2"/>
</dbReference>
<dbReference type="PROSITE" id="PS00039">
    <property type="entry name" value="DEAD_ATP_HELICASE"/>
    <property type="match status" value="1"/>
</dbReference>
<dbReference type="PROSITE" id="PS51192">
    <property type="entry name" value="HELICASE_ATP_BIND_1"/>
    <property type="match status" value="1"/>
</dbReference>
<dbReference type="PROSITE" id="PS51194">
    <property type="entry name" value="HELICASE_CTER"/>
    <property type="match status" value="1"/>
</dbReference>
<dbReference type="PROSITE" id="PS51195">
    <property type="entry name" value="Q_MOTIF"/>
    <property type="match status" value="1"/>
</dbReference>
<keyword id="KW-0067">ATP-binding</keyword>
<keyword id="KW-0347">Helicase</keyword>
<keyword id="KW-0378">Hydrolase</keyword>
<keyword id="KW-0547">Nucleotide-binding</keyword>
<keyword id="KW-0539">Nucleus</keyword>
<keyword id="KW-1185">Reference proteome</keyword>
<keyword id="KW-0690">Ribosome biogenesis</keyword>
<keyword id="KW-0694">RNA-binding</keyword>
<keyword id="KW-0698">rRNA processing</keyword>
<reference key="1">
    <citation type="journal article" date="2003" name="Nature">
        <title>The genome sequence of the filamentous fungus Neurospora crassa.</title>
        <authorList>
            <person name="Galagan J.E."/>
            <person name="Calvo S.E."/>
            <person name="Borkovich K.A."/>
            <person name="Selker E.U."/>
            <person name="Read N.D."/>
            <person name="Jaffe D.B."/>
            <person name="FitzHugh W."/>
            <person name="Ma L.-J."/>
            <person name="Smirnov S."/>
            <person name="Purcell S."/>
            <person name="Rehman B."/>
            <person name="Elkins T."/>
            <person name="Engels R."/>
            <person name="Wang S."/>
            <person name="Nielsen C.B."/>
            <person name="Butler J."/>
            <person name="Endrizzi M."/>
            <person name="Qui D."/>
            <person name="Ianakiev P."/>
            <person name="Bell-Pedersen D."/>
            <person name="Nelson M.A."/>
            <person name="Werner-Washburne M."/>
            <person name="Selitrennikoff C.P."/>
            <person name="Kinsey J.A."/>
            <person name="Braun E.L."/>
            <person name="Zelter A."/>
            <person name="Schulte U."/>
            <person name="Kothe G.O."/>
            <person name="Jedd G."/>
            <person name="Mewes H.-W."/>
            <person name="Staben C."/>
            <person name="Marcotte E."/>
            <person name="Greenberg D."/>
            <person name="Roy A."/>
            <person name="Foley K."/>
            <person name="Naylor J."/>
            <person name="Stange-Thomann N."/>
            <person name="Barrett R."/>
            <person name="Gnerre S."/>
            <person name="Kamal M."/>
            <person name="Kamvysselis M."/>
            <person name="Mauceli E.W."/>
            <person name="Bielke C."/>
            <person name="Rudd S."/>
            <person name="Frishman D."/>
            <person name="Krystofova S."/>
            <person name="Rasmussen C."/>
            <person name="Metzenberg R.L."/>
            <person name="Perkins D.D."/>
            <person name="Kroken S."/>
            <person name="Cogoni C."/>
            <person name="Macino G."/>
            <person name="Catcheside D.E.A."/>
            <person name="Li W."/>
            <person name="Pratt R.J."/>
            <person name="Osmani S.A."/>
            <person name="DeSouza C.P.C."/>
            <person name="Glass N.L."/>
            <person name="Orbach M.J."/>
            <person name="Berglund J.A."/>
            <person name="Voelker R."/>
            <person name="Yarden O."/>
            <person name="Plamann M."/>
            <person name="Seiler S."/>
            <person name="Dunlap J.C."/>
            <person name="Radford A."/>
            <person name="Aramayo R."/>
            <person name="Natvig D.O."/>
            <person name="Alex L.A."/>
            <person name="Mannhaupt G."/>
            <person name="Ebbole D.J."/>
            <person name="Freitag M."/>
            <person name="Paulsen I."/>
            <person name="Sachs M.S."/>
            <person name="Lander E.S."/>
            <person name="Nusbaum C."/>
            <person name="Birren B.W."/>
        </authorList>
    </citation>
    <scope>NUCLEOTIDE SEQUENCE [LARGE SCALE GENOMIC DNA]</scope>
    <source>
        <strain>ATCC 24698 / 74-OR23-1A / CBS 708.71 / DSM 1257 / FGSC 987</strain>
    </source>
</reference>
<protein>
    <recommendedName>
        <fullName>ATP-dependent RNA helicase dbp-10</fullName>
        <ecNumber>3.6.4.13</ecNumber>
    </recommendedName>
</protein>
<comment type="function">
    <text evidence="1">ATP-binding RNA helicase involved in the biogenesis of 60S ribosomal subunits and is required for the normal formation of 25S and 5.8S rRNAs.</text>
</comment>
<comment type="catalytic activity">
    <reaction>
        <text>ATP + H2O = ADP + phosphate + H(+)</text>
        <dbReference type="Rhea" id="RHEA:13065"/>
        <dbReference type="ChEBI" id="CHEBI:15377"/>
        <dbReference type="ChEBI" id="CHEBI:15378"/>
        <dbReference type="ChEBI" id="CHEBI:30616"/>
        <dbReference type="ChEBI" id="CHEBI:43474"/>
        <dbReference type="ChEBI" id="CHEBI:456216"/>
        <dbReference type="EC" id="3.6.4.13"/>
    </reaction>
</comment>
<comment type="subcellular location">
    <subcellularLocation>
        <location evidence="1">Nucleus</location>
        <location evidence="1">Nucleolus</location>
    </subcellularLocation>
</comment>
<comment type="domain">
    <text>The Q motif is unique to and characteristic of the DEAD box family of RNA helicases and controls ATP binding and hydrolysis.</text>
</comment>
<comment type="similarity">
    <text evidence="5">Belongs to the DEAD box helicase family. DDX54/DBP10 subfamily.</text>
</comment>
<feature type="chain" id="PRO_0000232318" description="ATP-dependent RNA helicase dbp-10">
    <location>
        <begin position="1"/>
        <end position="934"/>
    </location>
</feature>
<feature type="domain" description="Helicase ATP-binding" evidence="2">
    <location>
        <begin position="130"/>
        <end position="302"/>
    </location>
</feature>
<feature type="domain" description="Helicase C-terminal" evidence="3">
    <location>
        <begin position="359"/>
        <end position="513"/>
    </location>
</feature>
<feature type="region of interest" description="Disordered" evidence="4">
    <location>
        <begin position="21"/>
        <end position="43"/>
    </location>
</feature>
<feature type="region of interest" description="Disordered" evidence="4">
    <location>
        <begin position="343"/>
        <end position="370"/>
    </location>
</feature>
<feature type="region of interest" description="Disordered" evidence="4">
    <location>
        <begin position="613"/>
        <end position="722"/>
    </location>
</feature>
<feature type="region of interest" description="Disordered" evidence="4">
    <location>
        <begin position="851"/>
        <end position="934"/>
    </location>
</feature>
<feature type="short sequence motif" description="Q motif">
    <location>
        <begin position="99"/>
        <end position="127"/>
    </location>
</feature>
<feature type="short sequence motif" description="DEAD box">
    <location>
        <begin position="250"/>
        <end position="253"/>
    </location>
</feature>
<feature type="compositionally biased region" description="Acidic residues" evidence="4">
    <location>
        <begin position="644"/>
        <end position="654"/>
    </location>
</feature>
<feature type="compositionally biased region" description="Acidic residues" evidence="4">
    <location>
        <begin position="662"/>
        <end position="700"/>
    </location>
</feature>
<feature type="compositionally biased region" description="Basic and acidic residues" evidence="4">
    <location>
        <begin position="864"/>
        <end position="926"/>
    </location>
</feature>
<feature type="binding site" evidence="2">
    <location>
        <begin position="143"/>
        <end position="150"/>
    </location>
    <ligand>
        <name>ATP</name>
        <dbReference type="ChEBI" id="CHEBI:30616"/>
    </ligand>
</feature>
<gene>
    <name type="primary">dbp-10</name>
    <name type="ORF">NCU07712</name>
</gene>
<sequence length="934" mass="103653">MPRRAASPTPSENEVDIAGALFNNDSDFEDNSSKHHTKKGAVTNSGLDLDFNDLLGNGDDGLPSFNGEGDDDEAFIASLTRSSQRKSSNIQGKSVKKGGGFQAMGLNAHLLRAITRKGFSVPTPIQRKAIPLILERKDVVGMARTGSGKTAAFVIPMIERLKGHSPRVGSRALIMSPSRELALQTLKVVKELGRGTDLKTVLLVGGDSLEEQFGMMASNPDIIIATPGRFLHLKVEMNLSLASIKYVVFDEADRLFEMGFATELTEILHALPPSRQTLLFSATLPSSLVEFARAGLQEPSLVRLDAETKVSPDLESAFFAVKGGEKEGALLHLLHDVIKVPLGPPEGTKEESDELQARKRKREYRPNPKEKPTEYSTIIFTATKHHVEYIANLLKLAGFAVSYVYGSLDQTARLIQVDNFRRGRTHILVVTDVAARGIDMPALANVINYDFPSQPKIFVHRVGRTARAGQRGWAYGLVRQSDVPYLLDLQLFLGRKLIIGHDQKNPSFAADVVVGTLKRDGVDVNIEWVEKALKESADLKALKGVAAKAEKLYMKTRNSASSQSAKRAREVTQSRGWTQLHPLFGEEAAEAQAARDDLLSRINRFKPQETIFELGPKGKSSRNKAAEVVRNMRSRFKERKTTNDEDDEDVDMEDAEGKPDGEETNAFEDFEDEEEEGEAEEAEEAEAKEDPYADDSDSEMEVTVSSSMHTKKKGGPVNFQDPEIFMSYTPRTTSLAEEKAYGVHSGGYSGNSFVEAARDATMDLTNDESAKNFGLPTKSKMRWDKRHSKYVAVANDEDGSKGAKMIRGESGVKIAASFKSGRFDRWRKDNRLGKLPTIGETEKSQLIRNFGAQPGQPRYKHKMEKAPKDADKFRDDYHVRKKRVAEAKEKRIGKYKDGEGSKRELKTATDIRKARAVAEKKREKNARPAKRQKR</sequence>
<proteinExistence type="inferred from homology"/>
<evidence type="ECO:0000250" key="1"/>
<evidence type="ECO:0000255" key="2">
    <source>
        <dbReference type="PROSITE-ProRule" id="PRU00541"/>
    </source>
</evidence>
<evidence type="ECO:0000255" key="3">
    <source>
        <dbReference type="PROSITE-ProRule" id="PRU00542"/>
    </source>
</evidence>
<evidence type="ECO:0000256" key="4">
    <source>
        <dbReference type="SAM" id="MobiDB-lite"/>
    </source>
</evidence>
<evidence type="ECO:0000305" key="5"/>
<accession>Q7S9J4</accession>